<comment type="function">
    <text evidence="1">Negatively regulates its own expression and that of the subsequent genes in the proximal part of the division and cell wall (dcw) gene cluster. Acts by binding directly to DNA. May also regulate the expression of genes outside the dcw cluster.</text>
</comment>
<comment type="subunit">
    <text evidence="1">Forms oligomers.</text>
</comment>
<comment type="subcellular location">
    <subcellularLocation>
        <location evidence="1">Cytoplasm</location>
        <location evidence="1">Nucleoid</location>
    </subcellularLocation>
</comment>
<comment type="similarity">
    <text evidence="1">Belongs to the MraZ family.</text>
</comment>
<dbReference type="EMBL" id="CP000857">
    <property type="protein sequence ID" value="ACN44319.1"/>
    <property type="molecule type" value="Genomic_DNA"/>
</dbReference>
<dbReference type="RefSeq" id="WP_000488294.1">
    <property type="nucleotide sequence ID" value="NC_012125.1"/>
</dbReference>
<dbReference type="SMR" id="C0Q5H7"/>
<dbReference type="KEGG" id="sei:SPC_0128"/>
<dbReference type="HOGENOM" id="CLU_107907_2_0_6"/>
<dbReference type="Proteomes" id="UP000001599">
    <property type="component" value="Chromosome"/>
</dbReference>
<dbReference type="GO" id="GO:0005737">
    <property type="term" value="C:cytoplasm"/>
    <property type="evidence" value="ECO:0007669"/>
    <property type="project" value="UniProtKB-UniRule"/>
</dbReference>
<dbReference type="GO" id="GO:0009295">
    <property type="term" value="C:nucleoid"/>
    <property type="evidence" value="ECO:0007669"/>
    <property type="project" value="UniProtKB-SubCell"/>
</dbReference>
<dbReference type="GO" id="GO:0003700">
    <property type="term" value="F:DNA-binding transcription factor activity"/>
    <property type="evidence" value="ECO:0007669"/>
    <property type="project" value="UniProtKB-UniRule"/>
</dbReference>
<dbReference type="GO" id="GO:0000976">
    <property type="term" value="F:transcription cis-regulatory region binding"/>
    <property type="evidence" value="ECO:0007669"/>
    <property type="project" value="TreeGrafter"/>
</dbReference>
<dbReference type="GO" id="GO:2000143">
    <property type="term" value="P:negative regulation of DNA-templated transcription initiation"/>
    <property type="evidence" value="ECO:0007669"/>
    <property type="project" value="TreeGrafter"/>
</dbReference>
<dbReference type="CDD" id="cd16321">
    <property type="entry name" value="MraZ_C"/>
    <property type="match status" value="1"/>
</dbReference>
<dbReference type="CDD" id="cd16320">
    <property type="entry name" value="MraZ_N"/>
    <property type="match status" value="1"/>
</dbReference>
<dbReference type="FunFam" id="3.40.1550.20:FF:000001">
    <property type="entry name" value="Transcriptional regulator MraZ"/>
    <property type="match status" value="1"/>
</dbReference>
<dbReference type="Gene3D" id="3.40.1550.20">
    <property type="entry name" value="Transcriptional regulator MraZ domain"/>
    <property type="match status" value="1"/>
</dbReference>
<dbReference type="HAMAP" id="MF_01008">
    <property type="entry name" value="MraZ"/>
    <property type="match status" value="1"/>
</dbReference>
<dbReference type="InterPro" id="IPR003444">
    <property type="entry name" value="MraZ"/>
</dbReference>
<dbReference type="InterPro" id="IPR035644">
    <property type="entry name" value="MraZ_C"/>
</dbReference>
<dbReference type="InterPro" id="IPR020603">
    <property type="entry name" value="MraZ_dom"/>
</dbReference>
<dbReference type="InterPro" id="IPR035642">
    <property type="entry name" value="MraZ_N"/>
</dbReference>
<dbReference type="InterPro" id="IPR038619">
    <property type="entry name" value="MraZ_sf"/>
</dbReference>
<dbReference type="InterPro" id="IPR007159">
    <property type="entry name" value="SpoVT-AbrB_dom"/>
</dbReference>
<dbReference type="InterPro" id="IPR037914">
    <property type="entry name" value="SpoVT-AbrB_sf"/>
</dbReference>
<dbReference type="NCBIfam" id="TIGR00242">
    <property type="entry name" value="division/cell wall cluster transcriptional repressor MraZ"/>
    <property type="match status" value="1"/>
</dbReference>
<dbReference type="PANTHER" id="PTHR34701">
    <property type="entry name" value="TRANSCRIPTIONAL REGULATOR MRAZ"/>
    <property type="match status" value="1"/>
</dbReference>
<dbReference type="PANTHER" id="PTHR34701:SF1">
    <property type="entry name" value="TRANSCRIPTIONAL REGULATOR MRAZ"/>
    <property type="match status" value="1"/>
</dbReference>
<dbReference type="Pfam" id="PF02381">
    <property type="entry name" value="MraZ"/>
    <property type="match status" value="2"/>
</dbReference>
<dbReference type="SUPFAM" id="SSF89447">
    <property type="entry name" value="AbrB/MazE/MraZ-like"/>
    <property type="match status" value="1"/>
</dbReference>
<dbReference type="PROSITE" id="PS51740">
    <property type="entry name" value="SPOVT_ABRB"/>
    <property type="match status" value="2"/>
</dbReference>
<sequence>MFRGATLVNLDSKGRLTVPTRYREQLIESATGQMVCTIDIHHPCLLLYPLPEWEIIEQKLSRLSSMNPVERRVQRLLLGHASECQMDGAGRLLIAPVLRQHAGLTKEVMLVGQFNKFELWDETTWYQQVKEDIDAEQSATETLSERLQDLSL</sequence>
<gene>
    <name evidence="1" type="primary">mraZ</name>
    <name type="ordered locus">SPC_0128</name>
</gene>
<name>MRAZ_SALPC</name>
<organism>
    <name type="scientific">Salmonella paratyphi C (strain RKS4594)</name>
    <dbReference type="NCBI Taxonomy" id="476213"/>
    <lineage>
        <taxon>Bacteria</taxon>
        <taxon>Pseudomonadati</taxon>
        <taxon>Pseudomonadota</taxon>
        <taxon>Gammaproteobacteria</taxon>
        <taxon>Enterobacterales</taxon>
        <taxon>Enterobacteriaceae</taxon>
        <taxon>Salmonella</taxon>
    </lineage>
</organism>
<feature type="chain" id="PRO_1000148867" description="Transcriptional regulator MraZ">
    <location>
        <begin position="1"/>
        <end position="152"/>
    </location>
</feature>
<feature type="domain" description="SpoVT-AbrB 1" evidence="2">
    <location>
        <begin position="5"/>
        <end position="52"/>
    </location>
</feature>
<feature type="domain" description="SpoVT-AbrB 2" evidence="2">
    <location>
        <begin position="81"/>
        <end position="124"/>
    </location>
</feature>
<protein>
    <recommendedName>
        <fullName>Transcriptional regulator MraZ</fullName>
    </recommendedName>
</protein>
<accession>C0Q5H7</accession>
<reference key="1">
    <citation type="journal article" date="2009" name="PLoS ONE">
        <title>Salmonella paratyphi C: genetic divergence from Salmonella choleraesuis and pathogenic convergence with Salmonella typhi.</title>
        <authorList>
            <person name="Liu W.-Q."/>
            <person name="Feng Y."/>
            <person name="Wang Y."/>
            <person name="Zou Q.-H."/>
            <person name="Chen F."/>
            <person name="Guo J.-T."/>
            <person name="Peng Y.-H."/>
            <person name="Jin Y."/>
            <person name="Li Y.-G."/>
            <person name="Hu S.-N."/>
            <person name="Johnston R.N."/>
            <person name="Liu G.-R."/>
            <person name="Liu S.-L."/>
        </authorList>
    </citation>
    <scope>NUCLEOTIDE SEQUENCE [LARGE SCALE GENOMIC DNA]</scope>
    <source>
        <strain>RKS4594</strain>
    </source>
</reference>
<evidence type="ECO:0000255" key="1">
    <source>
        <dbReference type="HAMAP-Rule" id="MF_01008"/>
    </source>
</evidence>
<evidence type="ECO:0000255" key="2">
    <source>
        <dbReference type="PROSITE-ProRule" id="PRU01076"/>
    </source>
</evidence>
<keyword id="KW-0963">Cytoplasm</keyword>
<keyword id="KW-0238">DNA-binding</keyword>
<keyword id="KW-0677">Repeat</keyword>
<keyword id="KW-0678">Repressor</keyword>
<keyword id="KW-0804">Transcription</keyword>
<keyword id="KW-0805">Transcription regulation</keyword>
<proteinExistence type="inferred from homology"/>